<name>MMS4_YEAST</name>
<protein>
    <recommendedName>
        <fullName>Crossover junction endonuclease MMS4</fullName>
        <ecNumber>3.1.22.-</ecNumber>
    </recommendedName>
</protein>
<keyword id="KW-0007">Acetylation</keyword>
<keyword id="KW-0175">Coiled coil</keyword>
<keyword id="KW-0227">DNA damage</keyword>
<keyword id="KW-0233">DNA recombination</keyword>
<keyword id="KW-0234">DNA repair</keyword>
<keyword id="KW-0255">Endonuclease</keyword>
<keyword id="KW-0378">Hydrolase</keyword>
<keyword id="KW-0460">Magnesium</keyword>
<keyword id="KW-0464">Manganese</keyword>
<keyword id="KW-0469">Meiosis</keyword>
<keyword id="KW-0479">Metal-binding</keyword>
<keyword id="KW-0540">Nuclease</keyword>
<keyword id="KW-0539">Nucleus</keyword>
<keyword id="KW-0597">Phosphoprotein</keyword>
<keyword id="KW-1185">Reference proteome</keyword>
<sequence length="691" mass="78764">MSQIVDFVEDKDSRNDASIQIIDGPSNVEIIALSESMDQDECKRAHVSSAEMIPSSPQRKSVSNDVENVDLNKSIELSAPFFQDISISKLDDFSTTVNSIIDSSLRNENNAKGNAKKLLDDLISDEWSADLESSGKKHNKSQYNLRDIAEKWGVQSLKNPEPIAVDCEYKTQGIGKTNSDISDSPKSQIGAADILFDFPLSPVKHENPTEEKHNSIANENSSPDNSLKPAGKQNHGEDGTSMAKRVYNKGEDEQEHLPKGKKRTIALSRTLINSTKLPDTVELNLSKFLDSSDSITTDVLSTPAKGSNIVRTGSQPIFSNANCFQEAKRSKTLTAEDPKCTKNTAREVSQLENYIAYGQYYTREDSKNKIRHLLKENKNAFKRVNQIYRDNIKARSQMIIEFSPSLLQLFKKGDSDLQQQLAPAVVQSSYNDSMPLLRFLRKCDSIYDFSNDFYYPCDPKIVEENVLILYYDAQEFFEQYTSQKKELYRKIRFFSKNGKHVILILSDINKLKRAIFQLENEKYKARVEQRLSGTEEALRPRSKKSSQVGKLGIKKFDLEQRLRFIDREWHVKIHTVNSHMEFINSLPNLVSLIGKQRMDPAIRYMKYAHLNVKSAQDSTETLKKTFHQIGRMPEMKANNVVSLYPSFQSLLEDIEKGRLQSDNEGKYLMTEAVEKRLYKLFTCTDPNDTIE</sequence>
<gene>
    <name type="primary">MMS4</name>
    <name type="synonym">SLX2</name>
    <name type="ordered locus">YBR098W</name>
    <name type="ORF">YBR0826</name>
    <name type="ORF">YBR0829</name>
    <name type="ORF">YBR100W</name>
</gene>
<proteinExistence type="evidence at protein level"/>
<comment type="function">
    <text evidence="3 4 5 6 7 8 9 10 11 12 13">Interacts with MUS81 to form a DNA structure-specific endonuclease with substrate preference for branched DNA structures with a 5'-end at the branch nick. Typical substrates include 3'-flap structures, D-loops, replication forks with regressed leading strands and nicked Holliday junctions. Cleavage probably occurs approximately half a helical turn upstream of the free 5'-end in these structures. May be required in mitosis for the processing of stalled replication fork intermediates arising spontaneously or subsequent to treatment with DNA damaging agents such as methylmethane sulfonate (MMS), camptothecin (CPT) or UV. May be required in meiosis for the repair of meiosis-specific double strand breaks subsequent to single-end invasion (SEI). This involves consecutive cleavage of D-loops and nicked Holliday junctions leading to sister chromatid crossover. In contrast to MSH4-MSH5 dependent crossover, double Holliday junctions do not seem to be involved. Spore formation and viability are severely impaired in deletion strains.</text>
</comment>
<comment type="cofactor">
    <cofactor evidence="12">
        <name>Mg(2+)</name>
        <dbReference type="ChEBI" id="CHEBI:18420"/>
    </cofactor>
    <cofactor evidence="12">
        <name>Mn(2+)</name>
        <dbReference type="ChEBI" id="CHEBI:29035"/>
    </cofactor>
</comment>
<comment type="biophysicochemical properties">
    <kinetics>
        <KM evidence="12">31.1 nM for a nicked Holliday junction</KM>
        <KM evidence="12">6.84 nM for a regressed leading strand replication fork</KM>
        <KM evidence="12">4.8 nM for a 3'-flap structure</KM>
        <KM evidence="12">3.45 nM for a nicked duplex</KM>
        <KM evidence="12">14 nM for a regressed lagging strand replication fork</KM>
        <KM evidence="12">245 nM for a Y structure</KM>
        <KM evidence="12">173 nM for a double flap structure</KM>
        <Vmax evidence="12">55.6 nmol/min/ng enzyme with a nicked Holliday junction as substrate</Vmax>
        <Vmax evidence="12">31.3 nmol/min/ng enzyme with a regressed leading strand replication fork as substrate</Vmax>
        <Vmax evidence="12">24.4 nmol/min/ng enzyme with a 3'-flap structure as substrate</Vmax>
        <Vmax evidence="12">2.21 nmol/min/ng enzyme with a nicked duplex as substrate</Vmax>
        <Vmax evidence="12">0.832 nmol/min/ng enzyme with a regressed lagging strand replication fork as subsystrate</Vmax>
        <Vmax evidence="12">0.0468 nmol/min/ng enzyme with a Y structure as substrate</Vmax>
        <Vmax evidence="12">0.0879 nmol/min/ng enzyme with a double flap structure as substrate</Vmax>
    </kinetics>
    <phDependence>
        <text evidence="12">Optimum pH is 8.0 for cleavage of a 3'-flap structure.</text>
    </phDependence>
</comment>
<comment type="subunit">
    <text evidence="3 4 11 12">Interacts with MUS81.</text>
</comment>
<comment type="interaction">
    <interactant intactId="EBI-21547">
        <id>P38257</id>
    </interactant>
    <interactant intactId="EBI-33508">
        <id>Q04149</id>
        <label>MUS81</label>
    </interactant>
    <organismsDiffer>false</organismsDiffer>
    <experiments>4</experiments>
</comment>
<comment type="interaction">
    <interactant intactId="EBI-21547">
        <id>P38257</id>
    </interactant>
    <interactant intactId="EBI-8637">
        <id>P0CS90</id>
        <label>SSC1</label>
    </interactant>
    <organismsDiffer>false</organismsDiffer>
    <experiments>2</experiments>
</comment>
<comment type="subcellular location">
    <subcellularLocation>
        <location evidence="11">Nucleus</location>
    </subcellularLocation>
</comment>
<comment type="miscellaneous">
    <text>Two distinct classes of meiotic crossovers have been demonstrated in budding yeast. Class I crossovers exhibit crossover interference and require MSH4 and MSH5 for their resolution, while class II crossovers exhibit no crossover interference and require MUS81 and MMS4. While class I crossovers represent the majority of crossovers in S.cerevisiae, they are virtually absent in S.pombe which lacks orthologs of MSH4 and MSH5.</text>
</comment>
<comment type="similarity">
    <text evidence="15">Belongs to the EME1/MMS4 family.</text>
</comment>
<comment type="sequence caution" evidence="15">
    <conflict type="frameshift">
        <sequence resource="EMBL-CDS" id="AAT92950"/>
    </conflict>
</comment>
<comment type="sequence caution" evidence="15">
    <conflict type="frameshift">
        <sequence resource="EMBL-CDS" id="CAA55603"/>
    </conflict>
</comment>
<comment type="sequence caution" evidence="15">
    <conflict type="frameshift">
        <sequence resource="EMBL-CDS" id="CAA85051"/>
    </conflict>
</comment>
<comment type="sequence caution" evidence="15">
    <conflict type="erroneous initiation">
        <sequence resource="EMBL-CDS" id="CAA85054"/>
    </conflict>
</comment>
<reference key="1">
    <citation type="journal article" date="1998" name="Mol. Gen. Genet.">
        <title>Mms4, a putative transcriptional (co)activator, protects Saccharomyces cerevisiae cells from endogenous and environmental DNA damage.</title>
        <authorList>
            <person name="Xiao W."/>
            <person name="Chow B.L."/>
            <person name="Milo C.N."/>
        </authorList>
    </citation>
    <scope>NUCLEOTIDE SEQUENCE [GENOMIC DNA]</scope>
    <scope>MUTAGENESIS OF GLY-173</scope>
    <source>
        <strain>S288c / GRF88</strain>
    </source>
</reference>
<reference key="2">
    <citation type="journal article" date="1994" name="Yeast">
        <title>Analysis of a 70 kb region on the right arm of yeast chromosome II.</title>
        <authorList>
            <person name="Mannhaupt G."/>
            <person name="Stucka R."/>
            <person name="Ehnle S."/>
            <person name="Vetter I."/>
            <person name="Feldmann H."/>
        </authorList>
    </citation>
    <scope>NUCLEOTIDE SEQUENCE [GENOMIC DNA]</scope>
    <source>
        <strain>ATCC 204508 / S288c</strain>
    </source>
</reference>
<reference key="3">
    <citation type="journal article" date="1994" name="EMBO J.">
        <title>Complete DNA sequence of yeast chromosome II.</title>
        <authorList>
            <person name="Feldmann H."/>
            <person name="Aigle M."/>
            <person name="Aljinovic G."/>
            <person name="Andre B."/>
            <person name="Baclet M.C."/>
            <person name="Barthe C."/>
            <person name="Baur A."/>
            <person name="Becam A.-M."/>
            <person name="Biteau N."/>
            <person name="Boles E."/>
            <person name="Brandt T."/>
            <person name="Brendel M."/>
            <person name="Brueckner M."/>
            <person name="Bussereau F."/>
            <person name="Christiansen C."/>
            <person name="Contreras R."/>
            <person name="Crouzet M."/>
            <person name="Cziepluch C."/>
            <person name="Demolis N."/>
            <person name="Delaveau T."/>
            <person name="Doignon F."/>
            <person name="Domdey H."/>
            <person name="Duesterhus S."/>
            <person name="Dubois E."/>
            <person name="Dujon B."/>
            <person name="El Bakkoury M."/>
            <person name="Entian K.-D."/>
            <person name="Feuermann M."/>
            <person name="Fiers W."/>
            <person name="Fobo G.M."/>
            <person name="Fritz C."/>
            <person name="Gassenhuber J."/>
            <person name="Glansdorff N."/>
            <person name="Goffeau A."/>
            <person name="Grivell L.A."/>
            <person name="de Haan M."/>
            <person name="Hein C."/>
            <person name="Herbert C.J."/>
            <person name="Hollenberg C.P."/>
            <person name="Holmstroem K."/>
            <person name="Jacq C."/>
            <person name="Jacquet M."/>
            <person name="Jauniaux J.-C."/>
            <person name="Jonniaux J.-L."/>
            <person name="Kallesoee T."/>
            <person name="Kiesau P."/>
            <person name="Kirchrath L."/>
            <person name="Koetter P."/>
            <person name="Korol S."/>
            <person name="Liebl S."/>
            <person name="Logghe M."/>
            <person name="Lohan A.J.E."/>
            <person name="Louis E.J."/>
            <person name="Li Z.Y."/>
            <person name="Maat M.J."/>
            <person name="Mallet L."/>
            <person name="Mannhaupt G."/>
            <person name="Messenguy F."/>
            <person name="Miosga T."/>
            <person name="Molemans F."/>
            <person name="Mueller S."/>
            <person name="Nasr F."/>
            <person name="Obermaier B."/>
            <person name="Perea J."/>
            <person name="Pierard A."/>
            <person name="Piravandi E."/>
            <person name="Pohl F.M."/>
            <person name="Pohl T.M."/>
            <person name="Potier S."/>
            <person name="Proft M."/>
            <person name="Purnelle B."/>
            <person name="Ramezani Rad M."/>
            <person name="Rieger M."/>
            <person name="Rose M."/>
            <person name="Schaaff-Gerstenschlaeger I."/>
            <person name="Scherens B."/>
            <person name="Schwarzlose C."/>
            <person name="Skala J."/>
            <person name="Slonimski P.P."/>
            <person name="Smits P.H.M."/>
            <person name="Souciet J.-L."/>
            <person name="Steensma H.Y."/>
            <person name="Stucka R."/>
            <person name="Urrestarazu L.A."/>
            <person name="van der Aart Q.J.M."/>
            <person name="Van Dyck L."/>
            <person name="Vassarotti A."/>
            <person name="Vetter I."/>
            <person name="Vierendeels F."/>
            <person name="Vissers S."/>
            <person name="Wagner G."/>
            <person name="de Wergifosse P."/>
            <person name="Wolfe K.H."/>
            <person name="Zagulski M."/>
            <person name="Zimmermann F.K."/>
            <person name="Mewes H.-W."/>
            <person name="Kleine K."/>
        </authorList>
    </citation>
    <scope>NUCLEOTIDE SEQUENCE [LARGE SCALE GENOMIC DNA]</scope>
    <source>
        <strain>ATCC 204508 / S288c</strain>
    </source>
</reference>
<reference key="4">
    <citation type="journal article" date="2014" name="G3 (Bethesda)">
        <title>The reference genome sequence of Saccharomyces cerevisiae: Then and now.</title>
        <authorList>
            <person name="Engel S.R."/>
            <person name="Dietrich F.S."/>
            <person name="Fisk D.G."/>
            <person name="Binkley G."/>
            <person name="Balakrishnan R."/>
            <person name="Costanzo M.C."/>
            <person name="Dwight S.S."/>
            <person name="Hitz B.C."/>
            <person name="Karra K."/>
            <person name="Nash R.S."/>
            <person name="Weng S."/>
            <person name="Wong E.D."/>
            <person name="Lloyd P."/>
            <person name="Skrzypek M.S."/>
            <person name="Miyasato S.R."/>
            <person name="Simison M."/>
            <person name="Cherry J.M."/>
        </authorList>
    </citation>
    <scope>GENOME REANNOTATION</scope>
    <source>
        <strain>ATCC 204508 / S288c</strain>
    </source>
</reference>
<reference key="5">
    <citation type="journal article" date="2007" name="Genome Res.">
        <title>Approaching a complete repository of sequence-verified protein-encoding clones for Saccharomyces cerevisiae.</title>
        <authorList>
            <person name="Hu Y."/>
            <person name="Rolfs A."/>
            <person name="Bhullar B."/>
            <person name="Murthy T.V.S."/>
            <person name="Zhu C."/>
            <person name="Berger M.F."/>
            <person name="Camargo A.A."/>
            <person name="Kelley F."/>
            <person name="McCarron S."/>
            <person name="Jepson D."/>
            <person name="Richardson A."/>
            <person name="Raphael J."/>
            <person name="Moreira D."/>
            <person name="Taycher E."/>
            <person name="Zuo D."/>
            <person name="Mohr S."/>
            <person name="Kane M.F."/>
            <person name="Williamson J."/>
            <person name="Simpson A.J.G."/>
            <person name="Bulyk M.L."/>
            <person name="Harlow E."/>
            <person name="Marsischky G."/>
            <person name="Kolodner R.D."/>
            <person name="LaBaer J."/>
        </authorList>
    </citation>
    <scope>NUCLEOTIDE SEQUENCE [GENOMIC DNA]</scope>
    <source>
        <strain>ATCC 204508 / S288c</strain>
    </source>
</reference>
<reference key="6">
    <citation type="journal article" date="2001" name="Genes Dev.">
        <title>Functional overlap between Sgs1-Top3 and the Mms4-Mus81 endonuclease.</title>
        <authorList>
            <person name="Kaliraman V."/>
            <person name="Mullen J.R."/>
            <person name="Fricke W.M."/>
            <person name="Bastin-Shanower S.A."/>
            <person name="Brill S.J."/>
        </authorList>
    </citation>
    <scope>FUNCTION</scope>
    <scope>PROCESSING OF STALLED REPLICATION FORK</scope>
    <scope>INTERACTION WITH MUS81</scope>
</reference>
<reference key="7">
    <citation type="journal article" date="2001" name="Genetics">
        <title>Requirement for three novel protein complexes in the absence of the Sgs1 DNA helicase in Saccharomyces cerevisiae.</title>
        <authorList>
            <person name="Mullen J.R."/>
            <person name="Kaliraman V."/>
            <person name="Ibrahim S.S."/>
            <person name="Brill S.J."/>
        </authorList>
    </citation>
    <scope>FUNCTION</scope>
    <scope>INTERACTION WITH MUS81</scope>
</reference>
<reference key="8">
    <citation type="journal article" date="2001" name="Genetics">
        <title>A role for MMS4 in the processing of recombination intermediates during meiosis in Saccharomyces cerevisiae.</title>
        <authorList>
            <person name="de los Santos T."/>
            <person name="Loidl J."/>
            <person name="Larkin B."/>
            <person name="Hollingsworth N.M."/>
        </authorList>
    </citation>
    <scope>FUNCTION</scope>
</reference>
<reference key="9">
    <citation type="journal article" date="2002" name="Proc. Natl. Acad. Sci. U.S.A.">
        <title>Alternate pathways involving Sgs1/Top3, Mus81/ Mms4, and Srs2 prevent formation of toxic recombination intermediates from single-stranded gaps created by DNA replication.</title>
        <authorList>
            <person name="Fabre F."/>
            <person name="Chan A."/>
            <person name="Heyer W.-D."/>
            <person name="Gangloff S."/>
        </authorList>
    </citation>
    <scope>FUNCTION</scope>
</reference>
<reference key="10">
    <citation type="journal article" date="2002" name="Proc. Natl. Acad. Sci. U.S.A.">
        <authorList>
            <person name="Fabre F."/>
            <person name="Chan A."/>
            <person name="Heyer W.-D."/>
            <person name="Gangloff S."/>
        </authorList>
    </citation>
    <scope>ERRATUM OF PUBMED:12475932</scope>
</reference>
<reference key="11">
    <citation type="journal article" date="2003" name="DNA Repair">
        <title>Functional domains required for the Saccharomyces cerevisiae Mus81-Mms4 endonuclease complex formation and nuclear localization.</title>
        <authorList>
            <person name="Fu Y."/>
            <person name="Xiao W."/>
        </authorList>
    </citation>
    <scope>FUNCTION</scope>
    <scope>INTERACTION WITH MUS81</scope>
    <scope>SUBCELLULAR LOCATION</scope>
    <scope>CHARACTERIZATION OF MUTANT ARG-173</scope>
</reference>
<reference key="12">
    <citation type="journal article" date="2003" name="Genetics">
        <title>The Mus81/Mms4 endonuclease acts independently of double-Holliday junction resolution to promote a distinct subset of crossovers during meiosis in budding yeast.</title>
        <authorList>
            <person name="de los Santos T."/>
            <person name="Hunter N."/>
            <person name="Lee C."/>
            <person name="Larkin B."/>
            <person name="Loidl J."/>
            <person name="Hollingsworth N.M."/>
        </authorList>
    </citation>
    <scope>FUNCTION</scope>
    <scope>CROSSOVER WITHOUT DOUBLE HOLLIDAY JUNCTION</scope>
</reference>
<reference key="13">
    <citation type="journal article" date="2003" name="J. Biol. Chem.">
        <title>Cleavage of model replication forks by fission yeast Mus81-Eme1 and budding yeast Mus81-Mms4.</title>
        <authorList>
            <person name="Whitby M.C."/>
            <person name="Osman F."/>
            <person name="Dixon J."/>
        </authorList>
    </citation>
    <scope>FUNCTION</scope>
</reference>
<reference key="14">
    <citation type="journal article" date="2003" name="Mol. Cell. Biol.">
        <title>The mechanism of Mus81-Mms4 cleavage site selection distinguishes it from the homologous endonuclease Rad1-Rad10.</title>
        <authorList>
            <person name="Bastin-Shanower S.A."/>
            <person name="Fricke W.M."/>
            <person name="Mullen J.R."/>
            <person name="Brill S.J."/>
        </authorList>
    </citation>
    <scope>FUNCTION</scope>
    <scope>CLEAVAGE SITE SELECTION</scope>
</reference>
<reference key="15">
    <citation type="journal article" date="2003" name="Mol. Cell">
        <title>Generating crossovers by resolution of nicked Holliday junctions: a role for Mus81-Eme1 in meiosis.</title>
        <authorList>
            <person name="Osman F."/>
            <person name="Dixon J."/>
            <person name="Doe C.L."/>
            <person name="Whitby M.C."/>
        </authorList>
    </citation>
    <scope>FUNCTION</scope>
    <scope>CROSSOVER WITHOUT DOUBLE HOLLIDAY JUNCTION</scope>
</reference>
<reference key="16">
    <citation type="journal article" date="2004" name="Genetics">
        <title>Competing crossover pathways act during meiosis in Saccharomyces cerevisiae.</title>
        <authorList>
            <person name="Argueso J.L."/>
            <person name="Wanat J."/>
            <person name="Gemici Z."/>
            <person name="Alani E."/>
        </authorList>
    </citation>
    <scope>FUNCTION</scope>
</reference>
<reference key="17">
    <citation type="journal article" date="2005" name="DNA Repair">
        <title>Substrate specificity of the Saccharomyces cerevisiae Mus81-Mms4 endonuclease.</title>
        <authorList>
            <person name="Fricke W.M."/>
            <person name="Bastin-Shanower S.A."/>
            <person name="Brill S.J."/>
        </authorList>
    </citation>
    <scope>FUNCTION</scope>
    <scope>COFACTOR</scope>
    <scope>BIOPHYSICOCHEMICAL PROPERTIES</scope>
    <scope>INTERACTION WITH MUS81</scope>
</reference>
<reference key="18">
    <citation type="journal article" date="2004" name="Genes Dev.">
        <title>The Mus81 solution to resolution: generating meiotic crossovers without Holliday junctions.</title>
        <authorList>
            <person name="Hollingsworth N.M."/>
            <person name="Brill S.J."/>
        </authorList>
    </citation>
    <scope>REVIEW</scope>
</reference>
<reference key="19">
    <citation type="journal article" date="2008" name="Mol. Cell. Proteomics">
        <title>A multidimensional chromatography technology for in-depth phosphoproteome analysis.</title>
        <authorList>
            <person name="Albuquerque C.P."/>
            <person name="Smolka M.B."/>
            <person name="Payne S.H."/>
            <person name="Bafna V."/>
            <person name="Eng J."/>
            <person name="Zhou H."/>
        </authorList>
    </citation>
    <scope>IDENTIFICATION BY MASS SPECTROMETRY [LARGE SCALE ANALYSIS]</scope>
</reference>
<reference key="20">
    <citation type="journal article" date="2009" name="Science">
        <title>Global analysis of Cdk1 substrate phosphorylation sites provides insights into evolution.</title>
        <authorList>
            <person name="Holt L.J."/>
            <person name="Tuch B.B."/>
            <person name="Villen J."/>
            <person name="Johnson A.D."/>
            <person name="Gygi S.P."/>
            <person name="Morgan D.O."/>
        </authorList>
    </citation>
    <scope>PHOSPHORYLATION [LARGE SCALE ANALYSIS] AT SER-48; SER-49 AND SER-61</scope>
    <scope>IDENTIFICATION BY MASS SPECTROMETRY [LARGE SCALE ANALYSIS]</scope>
</reference>
<reference key="21">
    <citation type="journal article" date="2012" name="Proc. Natl. Acad. Sci. U.S.A.">
        <title>N-terminal acetylome analyses and functional insights of the N-terminal acetyltransferase NatB.</title>
        <authorList>
            <person name="Van Damme P."/>
            <person name="Lasa M."/>
            <person name="Polevoda B."/>
            <person name="Gazquez C."/>
            <person name="Elosegui-Artola A."/>
            <person name="Kim D.S."/>
            <person name="De Juan-Pardo E."/>
            <person name="Demeyer K."/>
            <person name="Hole K."/>
            <person name="Larrea E."/>
            <person name="Timmerman E."/>
            <person name="Prieto J."/>
            <person name="Arnesen T."/>
            <person name="Sherman F."/>
            <person name="Gevaert K."/>
            <person name="Aldabe R."/>
        </authorList>
    </citation>
    <scope>ACETYLATION [LARGE SCALE ANALYSIS] AT SER-2</scope>
    <scope>CLEAVAGE OF INITIATOR METHIONINE [LARGE SCALE ANALYSIS]</scope>
    <scope>IDENTIFICATION BY MASS SPECTROMETRY [LARGE SCALE ANALYSIS]</scope>
</reference>
<organism>
    <name type="scientific">Saccharomyces cerevisiae (strain ATCC 204508 / S288c)</name>
    <name type="common">Baker's yeast</name>
    <dbReference type="NCBI Taxonomy" id="559292"/>
    <lineage>
        <taxon>Eukaryota</taxon>
        <taxon>Fungi</taxon>
        <taxon>Dikarya</taxon>
        <taxon>Ascomycota</taxon>
        <taxon>Saccharomycotina</taxon>
        <taxon>Saccharomycetes</taxon>
        <taxon>Saccharomycetales</taxon>
        <taxon>Saccharomycetaceae</taxon>
        <taxon>Saccharomyces</taxon>
    </lineage>
</organism>
<feature type="initiator methionine" description="Removed" evidence="17">
    <location>
        <position position="1"/>
    </location>
</feature>
<feature type="chain" id="PRO_0000096516" description="Crossover junction endonuclease MMS4">
    <location>
        <begin position="2"/>
        <end position="691"/>
    </location>
</feature>
<feature type="region of interest" description="Disordered" evidence="2">
    <location>
        <begin position="201"/>
        <end position="240"/>
    </location>
</feature>
<feature type="region of interest" description="Interaction with MUS81">
    <location>
        <begin position="598"/>
        <end position="691"/>
    </location>
</feature>
<feature type="coiled-coil region" evidence="1">
    <location>
        <begin position="364"/>
        <end position="391"/>
    </location>
</feature>
<feature type="coiled-coil region" evidence="1">
    <location>
        <begin position="507"/>
        <end position="529"/>
    </location>
</feature>
<feature type="compositionally biased region" description="Basic and acidic residues" evidence="2">
    <location>
        <begin position="203"/>
        <end position="214"/>
    </location>
</feature>
<feature type="compositionally biased region" description="Polar residues" evidence="2">
    <location>
        <begin position="215"/>
        <end position="225"/>
    </location>
</feature>
<feature type="modified residue" description="N-acetylserine" evidence="17">
    <location>
        <position position="2"/>
    </location>
</feature>
<feature type="modified residue" description="Phosphoserine" evidence="16">
    <location>
        <position position="48"/>
    </location>
</feature>
<feature type="modified residue" description="Phosphoserine" evidence="16">
    <location>
        <position position="49"/>
    </location>
</feature>
<feature type="modified residue" description="Phosphoserine" evidence="16">
    <location>
        <position position="61"/>
    </location>
</feature>
<feature type="mutagenesis site" description="In allele MMS4-1; loss of activity." evidence="14">
    <original>G</original>
    <variation>R</variation>
    <location>
        <position position="173"/>
    </location>
</feature>
<dbReference type="EC" id="3.1.22.-"/>
<dbReference type="EMBL" id="U14000">
    <property type="protein sequence ID" value="AAF06816.1"/>
    <property type="molecule type" value="Genomic_DNA"/>
</dbReference>
<dbReference type="EMBL" id="X78993">
    <property type="protein sequence ID" value="CAA55603.1"/>
    <property type="status" value="ALT_FRAME"/>
    <property type="molecule type" value="Genomic_DNA"/>
</dbReference>
<dbReference type="EMBL" id="Z35967">
    <property type="protein sequence ID" value="CAA85051.1"/>
    <property type="status" value="ALT_FRAME"/>
    <property type="molecule type" value="Genomic_DNA"/>
</dbReference>
<dbReference type="EMBL" id="Z35968">
    <property type="protein sequence ID" value="CAA85054.1"/>
    <property type="status" value="ALT_INIT"/>
    <property type="molecule type" value="Genomic_DNA"/>
</dbReference>
<dbReference type="EMBL" id="AY692931">
    <property type="protein sequence ID" value="AAT92950.1"/>
    <property type="status" value="ALT_FRAME"/>
    <property type="molecule type" value="Genomic_DNA"/>
</dbReference>
<dbReference type="EMBL" id="BK006936">
    <property type="protein sequence ID" value="DAA07219.1"/>
    <property type="molecule type" value="Genomic_DNA"/>
</dbReference>
<dbReference type="PIR" id="S45968">
    <property type="entry name" value="S45968"/>
</dbReference>
<dbReference type="PIR" id="S48265">
    <property type="entry name" value="S48265"/>
</dbReference>
<dbReference type="RefSeq" id="NP_009656.2">
    <property type="nucleotide sequence ID" value="NM_001178446.1"/>
</dbReference>
<dbReference type="BioGRID" id="32804">
    <property type="interactions" value="235"/>
</dbReference>
<dbReference type="ComplexPortal" id="CPX-1670">
    <property type="entry name" value="MUS81-MMS4 structure-specific endonuclease complex"/>
</dbReference>
<dbReference type="DIP" id="DIP-2927N"/>
<dbReference type="FunCoup" id="P38257">
    <property type="interactions" value="238"/>
</dbReference>
<dbReference type="IntAct" id="P38257">
    <property type="interactions" value="9"/>
</dbReference>
<dbReference type="MINT" id="P38257"/>
<dbReference type="STRING" id="4932.YBR098W"/>
<dbReference type="iPTMnet" id="P38257"/>
<dbReference type="PaxDb" id="4932-YBR098W"/>
<dbReference type="PeptideAtlas" id="P38257"/>
<dbReference type="EnsemblFungi" id="YBR098W_mRNA">
    <property type="protein sequence ID" value="YBR098W"/>
    <property type="gene ID" value="YBR098W"/>
</dbReference>
<dbReference type="GeneID" id="852395"/>
<dbReference type="KEGG" id="sce:YBR098W"/>
<dbReference type="AGR" id="SGD:S000000302"/>
<dbReference type="SGD" id="S000000302">
    <property type="gene designation" value="MMS4"/>
</dbReference>
<dbReference type="VEuPathDB" id="FungiDB:YBR098W"/>
<dbReference type="eggNOG" id="ENOG502RY0Q">
    <property type="taxonomic scope" value="Eukaryota"/>
</dbReference>
<dbReference type="HOGENOM" id="CLU_023637_0_0_1"/>
<dbReference type="InParanoid" id="P38257"/>
<dbReference type="OMA" id="SHMEFIN"/>
<dbReference type="OrthoDB" id="343092at2759"/>
<dbReference type="BioCyc" id="YEAST:G3O-29062-MONOMER"/>
<dbReference type="Reactome" id="R-SCE-5693568">
    <property type="pathway name" value="Resolution of D-loop Structures through Holliday Junction Intermediates"/>
</dbReference>
<dbReference type="BioGRID-ORCS" id="852395">
    <property type="hits" value="1 hit in 10 CRISPR screens"/>
</dbReference>
<dbReference type="PRO" id="PR:P38257"/>
<dbReference type="Proteomes" id="UP000002311">
    <property type="component" value="Chromosome II"/>
</dbReference>
<dbReference type="RNAct" id="P38257">
    <property type="molecule type" value="protein"/>
</dbReference>
<dbReference type="GO" id="GO:0048476">
    <property type="term" value="C:Holliday junction resolvase complex"/>
    <property type="evidence" value="ECO:0000314"/>
    <property type="project" value="SGD"/>
</dbReference>
<dbReference type="GO" id="GO:0005634">
    <property type="term" value="C:nucleus"/>
    <property type="evidence" value="ECO:0007669"/>
    <property type="project" value="UniProtKB-SubCell"/>
</dbReference>
<dbReference type="GO" id="GO:0003677">
    <property type="term" value="F:DNA binding"/>
    <property type="evidence" value="ECO:0007669"/>
    <property type="project" value="InterPro"/>
</dbReference>
<dbReference type="GO" id="GO:0004519">
    <property type="term" value="F:endonuclease activity"/>
    <property type="evidence" value="ECO:0007669"/>
    <property type="project" value="UniProtKB-KW"/>
</dbReference>
<dbReference type="GO" id="GO:0046872">
    <property type="term" value="F:metal ion binding"/>
    <property type="evidence" value="ECO:0007669"/>
    <property type="project" value="UniProtKB-KW"/>
</dbReference>
<dbReference type="GO" id="GO:0006974">
    <property type="term" value="P:DNA damage response"/>
    <property type="evidence" value="ECO:0000315"/>
    <property type="project" value="SGD"/>
</dbReference>
<dbReference type="GO" id="GO:0006281">
    <property type="term" value="P:DNA repair"/>
    <property type="evidence" value="ECO:0000315"/>
    <property type="project" value="SGD"/>
</dbReference>
<dbReference type="GO" id="GO:0006265">
    <property type="term" value="P:DNA topological change"/>
    <property type="evidence" value="ECO:0000316"/>
    <property type="project" value="SGD"/>
</dbReference>
<dbReference type="GO" id="GO:0006302">
    <property type="term" value="P:double-strand break repair"/>
    <property type="evidence" value="ECO:0000318"/>
    <property type="project" value="GO_Central"/>
</dbReference>
<dbReference type="GO" id="GO:0031573">
    <property type="term" value="P:mitotic intra-S DNA damage checkpoint signaling"/>
    <property type="evidence" value="ECO:0000318"/>
    <property type="project" value="GO_Central"/>
</dbReference>
<dbReference type="GO" id="GO:0007131">
    <property type="term" value="P:reciprocal meiotic recombination"/>
    <property type="evidence" value="ECO:0000315"/>
    <property type="project" value="SGD"/>
</dbReference>
<dbReference type="GO" id="GO:0010520">
    <property type="term" value="P:regulation of reciprocal meiotic recombination"/>
    <property type="evidence" value="ECO:0000316"/>
    <property type="project" value="SGD"/>
</dbReference>
<dbReference type="GO" id="GO:0031297">
    <property type="term" value="P:replication fork processing"/>
    <property type="evidence" value="ECO:0000318"/>
    <property type="project" value="GO_Central"/>
</dbReference>
<dbReference type="GO" id="GO:0000712">
    <property type="term" value="P:resolution of meiotic recombination intermediates"/>
    <property type="evidence" value="ECO:0000316"/>
    <property type="project" value="SGD"/>
</dbReference>
<dbReference type="CDD" id="cd20080">
    <property type="entry name" value="XPF_nuclease_EME-like"/>
    <property type="match status" value="1"/>
</dbReference>
<dbReference type="InterPro" id="IPR006166">
    <property type="entry name" value="ERCC4_domain"/>
</dbReference>
<dbReference type="InterPro" id="IPR033310">
    <property type="entry name" value="Mms4/EME1/EME2"/>
</dbReference>
<dbReference type="PANTHER" id="PTHR21077:SF5">
    <property type="entry name" value="CROSSOVER JUNCTION ENDONUCLEASE MMS4"/>
    <property type="match status" value="1"/>
</dbReference>
<dbReference type="PANTHER" id="PTHR21077">
    <property type="entry name" value="EME1 PROTEIN"/>
    <property type="match status" value="1"/>
</dbReference>
<dbReference type="Pfam" id="PF02732">
    <property type="entry name" value="ERCC4"/>
    <property type="match status" value="1"/>
</dbReference>
<dbReference type="SMART" id="SM00891">
    <property type="entry name" value="ERCC4"/>
    <property type="match status" value="1"/>
</dbReference>
<accession>P38257</accession>
<accession>D6VQ99</accession>
<accession>P38259</accession>
<accession>Q6B1Z9</accession>
<accession>Q9URQ2</accession>
<evidence type="ECO:0000255" key="1"/>
<evidence type="ECO:0000256" key="2">
    <source>
        <dbReference type="SAM" id="MobiDB-lite"/>
    </source>
</evidence>
<evidence type="ECO:0000269" key="3">
    <source>
    </source>
</evidence>
<evidence type="ECO:0000269" key="4">
    <source>
    </source>
</evidence>
<evidence type="ECO:0000269" key="5">
    <source>
    </source>
</evidence>
<evidence type="ECO:0000269" key="6">
    <source>
    </source>
</evidence>
<evidence type="ECO:0000269" key="7">
    <source>
    </source>
</evidence>
<evidence type="ECO:0000269" key="8">
    <source>
    </source>
</evidence>
<evidence type="ECO:0000269" key="9">
    <source>
    </source>
</evidence>
<evidence type="ECO:0000269" key="10">
    <source>
    </source>
</evidence>
<evidence type="ECO:0000269" key="11">
    <source>
    </source>
</evidence>
<evidence type="ECO:0000269" key="12">
    <source>
    </source>
</evidence>
<evidence type="ECO:0000269" key="13">
    <source>
    </source>
</evidence>
<evidence type="ECO:0000269" key="14">
    <source>
    </source>
</evidence>
<evidence type="ECO:0000305" key="15"/>
<evidence type="ECO:0007744" key="16">
    <source>
    </source>
</evidence>
<evidence type="ECO:0007744" key="17">
    <source>
    </source>
</evidence>